<comment type="function">
    <text evidence="1">Plays a major role to prevent cellular inhibition of viral genome replication by nuclear bodies. Assembles an SCF-like E3 ubiquitin ligase complex based on the cellular proteins ELOB, ELOC, CUL5 and RBX1, in cooperation with viral E1B-55K. This viral RING-type ligase ubiquitinates cellular substrates prior to proteasomal degradation: p53/TP53, LIG4, MRE11-RAD50-NBS1 (MRN) complex, ITGA3, DAXX and BLM.</text>
</comment>
<comment type="subunit">
    <text evidence="1">Interacts with E1B-55k.</text>
</comment>
<comment type="subcellular location">
    <subcellularLocation>
        <location evidence="1">Host nucleus</location>
    </subcellularLocation>
    <subcellularLocation>
        <location evidence="1">Host cytoplasm</location>
    </subcellularLocation>
</comment>
<comment type="miscellaneous">
    <text>This protein is the product of two different mRNAs spliced from the same primary transcript.</text>
</comment>
<comment type="similarity">
    <text evidence="2">Belongs to the adenoviridae E4 30 to 34 kDa protein family.</text>
</comment>
<keyword id="KW-0244">Early protein</keyword>
<keyword id="KW-1035">Host cytoplasm</keyword>
<keyword id="KW-1048">Host nucleus</keyword>
<name>E434_ADEM1</name>
<organismHost>
    <name type="scientific">Mus musculus</name>
    <name type="common">Mouse</name>
    <dbReference type="NCBI Taxonomy" id="10090"/>
</organismHost>
<organism>
    <name type="scientific">Murine adenovirus A serotype 1</name>
    <name type="common">MAdV-1</name>
    <name type="synonym">Murine adenovirus 1</name>
    <dbReference type="NCBI Taxonomy" id="10530"/>
    <lineage>
        <taxon>Viruses</taxon>
        <taxon>Varidnaviria</taxon>
        <taxon>Bamfordvirae</taxon>
        <taxon>Preplasmiviricota</taxon>
        <taxon>Tectiliviricetes</taxon>
        <taxon>Rowavirales</taxon>
        <taxon>Adenoviridae</taxon>
        <taxon>Mastadenovirus</taxon>
        <taxon>Murine mastadenovirus A</taxon>
    </lineage>
</organism>
<dbReference type="EMBL" id="M37187">
    <property type="protein sequence ID" value="AAA42514.1"/>
    <property type="molecule type" value="Genomic_DNA"/>
</dbReference>
<dbReference type="PIR" id="A38519">
    <property type="entry name" value="Q4ADM1"/>
</dbReference>
<dbReference type="GO" id="GO:0030430">
    <property type="term" value="C:host cell cytoplasm"/>
    <property type="evidence" value="ECO:0007669"/>
    <property type="project" value="UniProtKB-SubCell"/>
</dbReference>
<dbReference type="GO" id="GO:0042025">
    <property type="term" value="C:host cell nucleus"/>
    <property type="evidence" value="ECO:0007669"/>
    <property type="project" value="UniProtKB-SubCell"/>
</dbReference>
<dbReference type="InterPro" id="IPR007615">
    <property type="entry name" value="Adenovirus_E4_30/34"/>
</dbReference>
<dbReference type="Pfam" id="PF04528">
    <property type="entry name" value="Adeno_E4_34"/>
    <property type="match status" value="1"/>
</dbReference>
<evidence type="ECO:0000250" key="1">
    <source>
        <dbReference type="UniProtKB" id="P03239"/>
    </source>
</evidence>
<evidence type="ECO:0000305" key="2"/>
<feature type="chain" id="PRO_0000221783" description="Probable early E4 33 kDa protein">
    <location>
        <begin position="1"/>
        <end position="289"/>
    </location>
</feature>
<protein>
    <recommendedName>
        <fullName>Probable early E4 33 kDa protein</fullName>
    </recommendedName>
    <alternativeName>
        <fullName>ORF A/B protein</fullName>
    </alternativeName>
</protein>
<accession>P23125</accession>
<proteinExistence type="inferred from homology"/>
<reference key="1">
    <citation type="journal article" date="1991" name="Virology">
        <title>Early region 4 sequence and biological comparison of two isolates of mouse adenovirus type 1.</title>
        <authorList>
            <person name="Ball A.O."/>
            <person name="Beard C.W."/>
            <person name="Villegas P."/>
            <person name="Spindler K.R."/>
        </authorList>
    </citation>
    <scope>NUCLEOTIDE SEQUENCE [GENOMIC DNA]</scope>
</reference>
<sequence length="289" mass="33017">MTFCLLPAFTQAFCGCIFINPLTMSATLSRMDCCVGLPHCMGWLPSPVGAVAFVMEGALPIPWSYYLNSYDKHVLQQLDCLCLFPVTCYQSFTSYVTGDEVWSLHCHCGRQGSLQVGPRRLQCLAAAKVRELVVQKFLLGTRFNEYYPQYRVHANRYVNPGLEYVGSVWCGKHFIYVRADGAEFARLKGLRARLGQGVLFCESLLSCYVVIVCQQCACPPTDAQVDHCMRLLSFTLRRWQNLLLGRSGSSPLIPGFDIPRNRTERLRQRMLHRFYSYRTPIYRLTYLRG</sequence>